<keyword id="KW-0010">Activator</keyword>
<keyword id="KW-0244">Early protein</keyword>
<keyword id="KW-1185">Reference proteome</keyword>
<keyword id="KW-0804">Transcription</keyword>
<keyword id="KW-0805">Transcription regulation</keyword>
<evidence type="ECO:0000305" key="1"/>
<reference key="1">
    <citation type="journal article" date="1989" name="J. Mol. Biol.">
        <title>Genetic structure of the bacteriophage P22 PL operon.</title>
        <authorList>
            <person name="Semerjian A.V."/>
            <person name="Malloy D.C."/>
            <person name="Poteete A.R."/>
        </authorList>
    </citation>
    <scope>NUCLEOTIDE SEQUENCE [GENOMIC DNA]</scope>
</reference>
<reference key="2">
    <citation type="journal article" date="2000" name="J. Bacteriol.">
        <title>Sequence of the genome of Salmonella bacteriophage P22.</title>
        <authorList>
            <person name="Vander Byl C.S."/>
            <person name="Kropinski A.M.B."/>
        </authorList>
    </citation>
    <scope>NUCLEOTIDE SEQUENCE [LARGE SCALE GENOMIC DNA]</scope>
</reference>
<reference key="3">
    <citation type="journal article" date="2003" name="J. Bacteriol.">
        <title>Corrected sequence of the bacteriophage P22 genome.</title>
        <authorList>
            <person name="Pedulla M.L."/>
            <person name="Ford M.E."/>
            <person name="Karthikeyan T."/>
            <person name="Houtz J.M."/>
            <person name="Hendrix R.W."/>
            <person name="Hatfull G.F."/>
            <person name="Poteete A.R."/>
            <person name="Gilcrease E.B."/>
            <person name="Winn-Stapley D.A."/>
            <person name="Casjens S.R."/>
        </authorList>
    </citation>
    <scope>NUCLEOTIDE SEQUENCE [LARGE SCALE GENOMIC DNA]</scope>
</reference>
<comment type="function">
    <text>Presence of the CIII protein in the cell results in the stabilization of the CII transcriptional activator (a very unstable protein), CII activates CI, the gene for repressor, and thus promotes the establishment of lysogeny.</text>
</comment>
<comment type="similarity">
    <text evidence="1">Belongs to the lambda phage CIII protein family.</text>
</comment>
<name>RPC3_BPP22</name>
<dbReference type="EMBL" id="X15637">
    <property type="protein sequence ID" value="CAA33651.1"/>
    <property type="molecule type" value="Genomic_DNA"/>
</dbReference>
<dbReference type="EMBL" id="AF217253">
    <property type="protein sequence ID" value="AAF75017.1"/>
    <property type="molecule type" value="Genomic_DNA"/>
</dbReference>
<dbReference type="EMBL" id="BK000583">
    <property type="protein sequence ID" value="DAA01014.1"/>
    <property type="molecule type" value="Genomic_DNA"/>
</dbReference>
<dbReference type="PIR" id="S04247">
    <property type="entry name" value="QCBP22"/>
</dbReference>
<dbReference type="RefSeq" id="NP_059599.1">
    <property type="nucleotide sequence ID" value="NC_002371.2"/>
</dbReference>
<dbReference type="SMR" id="P14110"/>
<dbReference type="MEROPS" id="I75.001"/>
<dbReference type="GeneID" id="1262787"/>
<dbReference type="KEGG" id="vg:1262787"/>
<dbReference type="OrthoDB" id="27054at10239"/>
<dbReference type="Proteomes" id="UP000001795">
    <property type="component" value="Segment"/>
</dbReference>
<dbReference type="Proteomes" id="UP000007960">
    <property type="component" value="Segment"/>
</dbReference>
<dbReference type="InterPro" id="IPR013056">
    <property type="entry name" value="Phage_lambda_CIII"/>
</dbReference>
<dbReference type="Pfam" id="PF02061">
    <property type="entry name" value="Lambda_CIII"/>
    <property type="match status" value="1"/>
</dbReference>
<dbReference type="PRINTS" id="PR00936">
    <property type="entry name" value="BPLRPCIII"/>
</dbReference>
<dbReference type="PROSITE" id="PS00553">
    <property type="entry name" value="LAMBDA_PHAGE_CIII"/>
    <property type="match status" value="1"/>
</dbReference>
<feature type="chain" id="PRO_0000077593" description="Regulatory protein C3">
    <location>
        <begin position="1"/>
        <end position="52"/>
    </location>
</feature>
<protein>
    <recommendedName>
        <fullName>Regulatory protein C3</fullName>
    </recommendedName>
    <alternativeName>
        <fullName>CIII</fullName>
    </alternativeName>
</protein>
<gene>
    <name type="primary">C3</name>
</gene>
<proteinExistence type="inferred from homology"/>
<organismHost>
    <name type="scientific">Salmonella typhimurium</name>
    <dbReference type="NCBI Taxonomy" id="90371"/>
</organismHost>
<organism>
    <name type="scientific">Salmonella phage P22</name>
    <name type="common">Bacteriophage P22</name>
    <dbReference type="NCBI Taxonomy" id="10754"/>
    <lineage>
        <taxon>Viruses</taxon>
        <taxon>Duplodnaviria</taxon>
        <taxon>Heunggongvirae</taxon>
        <taxon>Uroviricota</taxon>
        <taxon>Caudoviricetes</taxon>
        <taxon>Lederbergvirus</taxon>
    </lineage>
</organism>
<accession>P14110</accession>
<accession>Q7PCF9</accession>
<sequence>MIIAIAGSARMGVSQLHESLLDRITRKLRAGWKRLADILNQPGVPSHDYCAC</sequence>